<sequence>MARLCTHTESGHYLMALDAGTGSVRAVIFDLQGKQIAVGQAEWQHLAVPDVPGSMEFDLAKNWQLACQCIRQALQKAAIPATAIAAVSACSMRESIVIYDSNGEPIWACANVDARAAHEVSELKELHDNTFEEEVYRCSGQTLALSAIPRLLWLAHHRPDIYHRASTVTMISDWMAFMLSGELAVDPSNAGTTGLLDLVTRNWKRSLLQMAGLRSDILSPVKETGTLLGHISQKAAEQCDLQAGTPVIVGGGDVQLGCLGLGVVRPAQTAVLGGTFWQQVVNLPAPVTDPNMNVRINPHVIPGMVQTESISFFTGLTMRWFRDAFCAEEKLIAERLGIDAYSLLEDMASRVPPGAYGVMPIFSDVMRFKRWYHAAPSFINLSIDPEKCNKATLFRALEENAAIVSACNLQQIAAFSGVQADSLVFAGGGSKGKLWSQILADVTGLTVHVPVVKEATALGCAIAAGVGVGIWPSLAETGEKLVRWDREHKPNPENFAVYQQAREKWQAVYQDQRALVDGGLTTSLWKAPGL</sequence>
<organism>
    <name type="scientific">Salmonella choleraesuis (strain SC-B67)</name>
    <dbReference type="NCBI Taxonomy" id="321314"/>
    <lineage>
        <taxon>Bacteria</taxon>
        <taxon>Pseudomonadati</taxon>
        <taxon>Pseudomonadota</taxon>
        <taxon>Gammaproteobacteria</taxon>
        <taxon>Enterobacterales</taxon>
        <taxon>Enterobacteriaceae</taxon>
        <taxon>Salmonella</taxon>
    </lineage>
</organism>
<proteinExistence type="inferred from homology"/>
<name>LSRK_SALCH</name>
<comment type="function">
    <text evidence="1">Catalyzes the phosphorylation of autoinducer-2 (AI-2) to phospho-AI-2, which subsequently inactivates the transcriptional regulator LsrR and leads to the transcription of the lsr operon. Phosphorylates the ring-open form of (S)-4,5-dihydroxypentane-2,3-dione (DPD), which is the precursor to all AI-2 signaling molecules, at the C5 position.</text>
</comment>
<comment type="catalytic activity">
    <reaction evidence="1">
        <text>(S)-4,5-dihydroxypentane-2,3-dione + ATP = (2S)-2-hydroxy-3,4-dioxopentyl phosphate + ADP + H(+)</text>
        <dbReference type="Rhea" id="RHEA:15377"/>
        <dbReference type="ChEBI" id="CHEBI:15378"/>
        <dbReference type="ChEBI" id="CHEBI:29484"/>
        <dbReference type="ChEBI" id="CHEBI:30616"/>
        <dbReference type="ChEBI" id="CHEBI:71677"/>
        <dbReference type="ChEBI" id="CHEBI:456216"/>
        <dbReference type="EC" id="2.7.1.189"/>
    </reaction>
</comment>
<comment type="subcellular location">
    <subcellularLocation>
        <location evidence="1">Cytoplasm</location>
    </subcellularLocation>
</comment>
<comment type="similarity">
    <text evidence="1">Belongs to the FGGY kinase family.</text>
</comment>
<protein>
    <recommendedName>
        <fullName evidence="1">Autoinducer-2 kinase</fullName>
        <shortName evidence="1">AI-2 kinase</shortName>
        <ecNumber evidence="1">2.7.1.189</ecNumber>
    </recommendedName>
</protein>
<accession>Q57HE4</accession>
<reference key="1">
    <citation type="journal article" date="2005" name="Nucleic Acids Res.">
        <title>The genome sequence of Salmonella enterica serovar Choleraesuis, a highly invasive and resistant zoonotic pathogen.</title>
        <authorList>
            <person name="Chiu C.-H."/>
            <person name="Tang P."/>
            <person name="Chu C."/>
            <person name="Hu S."/>
            <person name="Bao Q."/>
            <person name="Yu J."/>
            <person name="Chou Y.-Y."/>
            <person name="Wang H.-S."/>
            <person name="Lee Y.-S."/>
        </authorList>
    </citation>
    <scope>NUCLEOTIDE SEQUENCE [LARGE SCALE GENOMIC DNA]</scope>
    <source>
        <strain>SC-B67</strain>
    </source>
</reference>
<gene>
    <name evidence="1" type="primary">lsrK</name>
    <name type="ordered locus">SCH_3962</name>
</gene>
<evidence type="ECO:0000255" key="1">
    <source>
        <dbReference type="HAMAP-Rule" id="MF_02053"/>
    </source>
</evidence>
<dbReference type="EC" id="2.7.1.189" evidence="1"/>
<dbReference type="EMBL" id="AE017220">
    <property type="protein sequence ID" value="AAX67868.1"/>
    <property type="molecule type" value="Genomic_DNA"/>
</dbReference>
<dbReference type="RefSeq" id="WP_001541244.1">
    <property type="nucleotide sequence ID" value="NC_006905.1"/>
</dbReference>
<dbReference type="SMR" id="Q57HE4"/>
<dbReference type="KEGG" id="sec:SCH_3962"/>
<dbReference type="HOGENOM" id="CLU_009281_3_4_6"/>
<dbReference type="Proteomes" id="UP000000538">
    <property type="component" value="Chromosome"/>
</dbReference>
<dbReference type="GO" id="GO:0005737">
    <property type="term" value="C:cytoplasm"/>
    <property type="evidence" value="ECO:0007669"/>
    <property type="project" value="UniProtKB-SubCell"/>
</dbReference>
<dbReference type="GO" id="GO:0071518">
    <property type="term" value="F:autoinducer-2 kinase activity"/>
    <property type="evidence" value="ECO:0007669"/>
    <property type="project" value="UniProtKB-UniRule"/>
</dbReference>
<dbReference type="GO" id="GO:0005975">
    <property type="term" value="P:carbohydrate metabolic process"/>
    <property type="evidence" value="ECO:0007669"/>
    <property type="project" value="InterPro"/>
</dbReference>
<dbReference type="GO" id="GO:0009372">
    <property type="term" value="P:quorum sensing"/>
    <property type="evidence" value="ECO:0007669"/>
    <property type="project" value="InterPro"/>
</dbReference>
<dbReference type="CDD" id="cd07775">
    <property type="entry name" value="ASKHA_NBD_FGGY_AI-2K"/>
    <property type="match status" value="1"/>
</dbReference>
<dbReference type="Gene3D" id="3.30.420.40">
    <property type="match status" value="2"/>
</dbReference>
<dbReference type="HAMAP" id="MF_02053">
    <property type="entry name" value="LsrK"/>
    <property type="match status" value="1"/>
</dbReference>
<dbReference type="InterPro" id="IPR033676">
    <property type="entry name" value="AI-2_kinase"/>
</dbReference>
<dbReference type="InterPro" id="IPR043129">
    <property type="entry name" value="ATPase_NBD"/>
</dbReference>
<dbReference type="InterPro" id="IPR000577">
    <property type="entry name" value="Carb_kinase_FGGY"/>
</dbReference>
<dbReference type="InterPro" id="IPR018485">
    <property type="entry name" value="FGGY_C"/>
</dbReference>
<dbReference type="InterPro" id="IPR050406">
    <property type="entry name" value="FGGY_Carb_Kinase"/>
</dbReference>
<dbReference type="InterPro" id="IPR018484">
    <property type="entry name" value="FGGY_N"/>
</dbReference>
<dbReference type="NCBIfam" id="NF008187">
    <property type="entry name" value="PRK10939.1"/>
    <property type="match status" value="1"/>
</dbReference>
<dbReference type="PANTHER" id="PTHR43095:SF1">
    <property type="entry name" value="AUTOINDUCER-2 KINASE"/>
    <property type="match status" value="1"/>
</dbReference>
<dbReference type="PANTHER" id="PTHR43095">
    <property type="entry name" value="SUGAR KINASE"/>
    <property type="match status" value="1"/>
</dbReference>
<dbReference type="Pfam" id="PF02782">
    <property type="entry name" value="FGGY_C"/>
    <property type="match status" value="1"/>
</dbReference>
<dbReference type="Pfam" id="PF00370">
    <property type="entry name" value="FGGY_N"/>
    <property type="match status" value="1"/>
</dbReference>
<dbReference type="PIRSF" id="PIRSF000538">
    <property type="entry name" value="GlpK"/>
    <property type="match status" value="1"/>
</dbReference>
<dbReference type="SUPFAM" id="SSF53067">
    <property type="entry name" value="Actin-like ATPase domain"/>
    <property type="match status" value="2"/>
</dbReference>
<keyword id="KW-0963">Cytoplasm</keyword>
<keyword id="KW-0418">Kinase</keyword>
<keyword id="KW-0808">Transferase</keyword>
<feature type="chain" id="PRO_0000351595" description="Autoinducer-2 kinase">
    <location>
        <begin position="1"/>
        <end position="530"/>
    </location>
</feature>